<protein>
    <recommendedName>
        <fullName evidence="1">UPF0509 protein YciZ</fullName>
    </recommendedName>
</protein>
<name>YCIZ_SALPC</name>
<evidence type="ECO:0000255" key="1">
    <source>
        <dbReference type="HAMAP-Rule" id="MF_01641"/>
    </source>
</evidence>
<gene>
    <name evidence="1" type="primary">yciZ</name>
    <name type="ordered locus">SPC_2028</name>
</gene>
<accession>C0Q3Q9</accession>
<proteinExistence type="inferred from homology"/>
<dbReference type="EMBL" id="CP000857">
    <property type="protein sequence ID" value="ACN46164.1"/>
    <property type="molecule type" value="Genomic_DNA"/>
</dbReference>
<dbReference type="RefSeq" id="WP_001279854.1">
    <property type="nucleotide sequence ID" value="NC_012125.1"/>
</dbReference>
<dbReference type="KEGG" id="sei:SPC_2028"/>
<dbReference type="HOGENOM" id="CLU_180697_1_0_6"/>
<dbReference type="Proteomes" id="UP000001599">
    <property type="component" value="Chromosome"/>
</dbReference>
<dbReference type="HAMAP" id="MF_01641">
    <property type="entry name" value="UPF0509"/>
    <property type="match status" value="1"/>
</dbReference>
<dbReference type="InterPro" id="IPR020887">
    <property type="entry name" value="UPF0509"/>
</dbReference>
<dbReference type="NCBIfam" id="NF010179">
    <property type="entry name" value="PRK13658.1"/>
    <property type="match status" value="1"/>
</dbReference>
<dbReference type="Pfam" id="PF23675">
    <property type="entry name" value="YciZ"/>
    <property type="match status" value="1"/>
</dbReference>
<reference key="1">
    <citation type="journal article" date="2009" name="PLoS ONE">
        <title>Salmonella paratyphi C: genetic divergence from Salmonella choleraesuis and pathogenic convergence with Salmonella typhi.</title>
        <authorList>
            <person name="Liu W.-Q."/>
            <person name="Feng Y."/>
            <person name="Wang Y."/>
            <person name="Zou Q.-H."/>
            <person name="Chen F."/>
            <person name="Guo J.-T."/>
            <person name="Peng Y.-H."/>
            <person name="Jin Y."/>
            <person name="Li Y.-G."/>
            <person name="Hu S.-N."/>
            <person name="Johnston R.N."/>
            <person name="Liu G.-R."/>
            <person name="Liu S.-L."/>
        </authorList>
    </citation>
    <scope>NUCLEOTIDE SEQUENCE [LARGE SCALE GENOMIC DNA]</scope>
    <source>
        <strain>RKS4594</strain>
    </source>
</reference>
<feature type="chain" id="PRO_1000186857" description="UPF0509 protein YciZ">
    <location>
        <begin position="1"/>
        <end position="59"/>
    </location>
</feature>
<sequence>MSDIEAQRIAARIDTVLDILVAGDYHSAINNLEILRAELLDQVKDGISPSQAPGSPWEI</sequence>
<comment type="similarity">
    <text evidence="1">Belongs to the UPF0509 family.</text>
</comment>
<organism>
    <name type="scientific">Salmonella paratyphi C (strain RKS4594)</name>
    <dbReference type="NCBI Taxonomy" id="476213"/>
    <lineage>
        <taxon>Bacteria</taxon>
        <taxon>Pseudomonadati</taxon>
        <taxon>Pseudomonadota</taxon>
        <taxon>Gammaproteobacteria</taxon>
        <taxon>Enterobacterales</taxon>
        <taxon>Enterobacteriaceae</taxon>
        <taxon>Salmonella</taxon>
    </lineage>
</organism>